<accession>V6F244</accession>
<sequence>MLSAKGVSLGLGLGLGAWGPVLLGVVGVAGALALYGYYKNRNAEPAAAEAV</sequence>
<keyword id="KW-0091">Biomineralization</keyword>
<keyword id="KW-1281">Magnetosome</keyword>
<keyword id="KW-0472">Membrane</keyword>
<keyword id="KW-1185">Reference proteome</keyword>
<keyword id="KW-0812">Transmembrane</keyword>
<keyword id="KW-1133">Transmembrane helix</keyword>
<protein>
    <recommendedName>
        <fullName evidence="3">Magnetosome protein Mms5</fullName>
    </recommendedName>
</protein>
<feature type="chain" id="PRO_5004745167" description="Magnetosome protein Mms5">
    <location>
        <begin position="1"/>
        <end position="51"/>
    </location>
</feature>
<feature type="topological domain" description="Lumenal" evidence="3">
    <location>
        <begin position="1"/>
        <end position="8"/>
    </location>
</feature>
<feature type="transmembrane region" description="Helical" evidence="2">
    <location>
        <begin position="9"/>
        <end position="29"/>
    </location>
</feature>
<feature type="topological domain" description="Cytoplasmic" evidence="3">
    <location>
        <begin position="30"/>
        <end position="51"/>
    </location>
</feature>
<feature type="region of interest" description="LG region" evidence="3">
    <location>
        <begin position="9"/>
        <end position="16"/>
    </location>
</feature>
<gene>
    <name evidence="3" type="primary">mms5</name>
    <name type="ordered locus">MGMSRv2__2309</name>
</gene>
<comment type="function">
    <text evidence="1">Might be involved in magnetite crystal growth.</text>
</comment>
<comment type="subcellular location">
    <subcellularLocation>
        <location evidence="1">Magnetosome membrane</location>
        <topology evidence="2">Single-pass membrane protein</topology>
    </subcellularLocation>
</comment>
<comment type="PTM">
    <text evidence="1">May undergo N-terminal cleavage.</text>
</comment>
<comment type="miscellaneous">
    <text evidence="3">This bacteria makes up to 60 cubo-octahedral magnetosomes of about 45 nm in diameter which contain membrane-bound crystals of magnetite (Fe(3)O(4)).</text>
</comment>
<comment type="similarity">
    <text evidence="3">Belongs to the magnetosome MamD/Mms5 family.</text>
</comment>
<comment type="sequence caution" evidence="3">
    <conflict type="erroneous initiation">
        <sequence resource="EMBL-CDS" id="CDK99524"/>
    </conflict>
    <text>Extended N-terminus.</text>
</comment>
<reference key="1">
    <citation type="journal article" date="2014" name="Genome Announc.">
        <title>Complete genome sequence of Magnetospirillum gryphiswaldense MSR-1.</title>
        <authorList>
            <person name="Wang X."/>
            <person name="Wang Q."/>
            <person name="Zhang W."/>
            <person name="Wang Y."/>
            <person name="Li L."/>
            <person name="Wen T."/>
            <person name="Zhang T."/>
            <person name="Zhang Y."/>
            <person name="Xu J."/>
            <person name="Hu J."/>
            <person name="Li S."/>
            <person name="Liu L."/>
            <person name="Liu J."/>
            <person name="Jiang W."/>
            <person name="Tian J."/>
            <person name="Li Y."/>
            <person name="Schuler D."/>
            <person name="Wang L."/>
            <person name="Li J."/>
        </authorList>
    </citation>
    <scope>NUCLEOTIDE SEQUENCE [LARGE SCALE GENOMIC DNA]</scope>
    <source>
        <strain>DSM 6361 / JCM 21280 / NBRC 15271 / MSR-1</strain>
    </source>
</reference>
<evidence type="ECO:0000250" key="1">
    <source>
        <dbReference type="UniProtKB" id="Q2W8J4"/>
    </source>
</evidence>
<evidence type="ECO:0000255" key="2"/>
<evidence type="ECO:0000305" key="3"/>
<dbReference type="EMBL" id="HG794546">
    <property type="protein sequence ID" value="CDK99524.1"/>
    <property type="status" value="ALT_INIT"/>
    <property type="molecule type" value="Genomic_DNA"/>
</dbReference>
<dbReference type="STRING" id="1430440.MGMSRv2__2309"/>
<dbReference type="KEGG" id="mgy:MGMSRv2__2309"/>
<dbReference type="HOGENOM" id="CLU_1325061_0_0_5"/>
<dbReference type="Proteomes" id="UP000018922">
    <property type="component" value="Chromosome I"/>
</dbReference>
<dbReference type="GO" id="GO:0110146">
    <property type="term" value="C:magnetosome membrane"/>
    <property type="evidence" value="ECO:0000250"/>
    <property type="project" value="UniProtKB"/>
</dbReference>
<name>MMS5_MAGGM</name>
<organism>
    <name type="scientific">Magnetospirillum gryphiswaldense (strain DSM 6361 / JCM 21280 / NBRC 15271 / MSR-1)</name>
    <dbReference type="NCBI Taxonomy" id="431944"/>
    <lineage>
        <taxon>Bacteria</taxon>
        <taxon>Pseudomonadati</taxon>
        <taxon>Pseudomonadota</taxon>
        <taxon>Alphaproteobacteria</taxon>
        <taxon>Rhodospirillales</taxon>
        <taxon>Rhodospirillaceae</taxon>
        <taxon>Magnetospirillum</taxon>
    </lineage>
</organism>
<proteinExistence type="inferred from homology"/>